<gene>
    <name evidence="1" type="primary">tatB</name>
    <name type="ordered locus">Psyc_2001</name>
</gene>
<comment type="function">
    <text evidence="1">Part of the twin-arginine translocation (Tat) system that transports large folded proteins containing a characteristic twin-arginine motif in their signal peptide across membranes. Together with TatC, TatB is part of a receptor directly interacting with Tat signal peptides. TatB may form an oligomeric binding site that transiently accommodates folded Tat precursor proteins before their translocation.</text>
</comment>
<comment type="subunit">
    <text evidence="1">The Tat system comprises two distinct complexes: a TatABC complex, containing multiple copies of TatA, TatB and TatC subunits, and a separate TatA complex, containing only TatA subunits. Substrates initially bind to the TatABC complex, which probably triggers association of the separate TatA complex to form the active translocon.</text>
</comment>
<comment type="subcellular location">
    <subcellularLocation>
        <location evidence="1">Cell inner membrane</location>
        <topology evidence="1">Single-pass membrane protein</topology>
    </subcellularLocation>
</comment>
<comment type="similarity">
    <text evidence="1">Belongs to the TatB family.</text>
</comment>
<organism>
    <name type="scientific">Psychrobacter arcticus (strain DSM 17307 / VKM B-2377 / 273-4)</name>
    <dbReference type="NCBI Taxonomy" id="259536"/>
    <lineage>
        <taxon>Bacteria</taxon>
        <taxon>Pseudomonadati</taxon>
        <taxon>Pseudomonadota</taxon>
        <taxon>Gammaproteobacteria</taxon>
        <taxon>Moraxellales</taxon>
        <taxon>Moraxellaceae</taxon>
        <taxon>Psychrobacter</taxon>
    </lineage>
</organism>
<accession>Q4FQ60</accession>
<sequence>MFDIGFSELLLFGVIALIVLGPEKLPQAARTAGQWYAKIRRTVSTLQSEIEAELDLAETRQLMQKELAKIRQTEAEMRREMAEMRGSIKEFEHSQSQNLKTSDKAASPANQANNDSAIQNNNEPATFSYAYGQSNNLTDSQQLSNQDITSINSDAVTDSSTIKQPAQPLITKPWENMWFRLGAYDKARRLPAVPYLPNYKADILLNSSFDSSFDSPLNTQASVNQQESE</sequence>
<keyword id="KW-0997">Cell inner membrane</keyword>
<keyword id="KW-1003">Cell membrane</keyword>
<keyword id="KW-0472">Membrane</keyword>
<keyword id="KW-0653">Protein transport</keyword>
<keyword id="KW-1185">Reference proteome</keyword>
<keyword id="KW-0811">Translocation</keyword>
<keyword id="KW-0812">Transmembrane</keyword>
<keyword id="KW-1133">Transmembrane helix</keyword>
<keyword id="KW-0813">Transport</keyword>
<dbReference type="EMBL" id="CP000082">
    <property type="protein sequence ID" value="AAZ19848.1"/>
    <property type="molecule type" value="Genomic_DNA"/>
</dbReference>
<dbReference type="RefSeq" id="WP_011281256.1">
    <property type="nucleotide sequence ID" value="NC_007204.1"/>
</dbReference>
<dbReference type="SMR" id="Q4FQ60"/>
<dbReference type="STRING" id="259536.Psyc_2001"/>
<dbReference type="KEGG" id="par:Psyc_2001"/>
<dbReference type="eggNOG" id="COG1826">
    <property type="taxonomic scope" value="Bacteria"/>
</dbReference>
<dbReference type="HOGENOM" id="CLU_1304040_0_0_6"/>
<dbReference type="OrthoDB" id="9816005at2"/>
<dbReference type="Proteomes" id="UP000000546">
    <property type="component" value="Chromosome"/>
</dbReference>
<dbReference type="GO" id="GO:0033281">
    <property type="term" value="C:TAT protein transport complex"/>
    <property type="evidence" value="ECO:0007669"/>
    <property type="project" value="UniProtKB-UniRule"/>
</dbReference>
<dbReference type="GO" id="GO:0008320">
    <property type="term" value="F:protein transmembrane transporter activity"/>
    <property type="evidence" value="ECO:0007669"/>
    <property type="project" value="UniProtKB-UniRule"/>
</dbReference>
<dbReference type="GO" id="GO:0043953">
    <property type="term" value="P:protein transport by the Tat complex"/>
    <property type="evidence" value="ECO:0007669"/>
    <property type="project" value="UniProtKB-UniRule"/>
</dbReference>
<dbReference type="Gene3D" id="1.20.5.3310">
    <property type="match status" value="1"/>
</dbReference>
<dbReference type="HAMAP" id="MF_00237">
    <property type="entry name" value="TatB"/>
    <property type="match status" value="1"/>
</dbReference>
<dbReference type="InterPro" id="IPR003369">
    <property type="entry name" value="TatA/B/E"/>
</dbReference>
<dbReference type="InterPro" id="IPR018448">
    <property type="entry name" value="TatB"/>
</dbReference>
<dbReference type="NCBIfam" id="TIGR01410">
    <property type="entry name" value="tatB"/>
    <property type="match status" value="1"/>
</dbReference>
<dbReference type="PANTHER" id="PTHR33162">
    <property type="entry name" value="SEC-INDEPENDENT PROTEIN TRANSLOCASE PROTEIN TATA, CHLOROPLASTIC"/>
    <property type="match status" value="1"/>
</dbReference>
<dbReference type="PANTHER" id="PTHR33162:SF1">
    <property type="entry name" value="SEC-INDEPENDENT PROTEIN TRANSLOCASE PROTEIN TATA, CHLOROPLASTIC"/>
    <property type="match status" value="1"/>
</dbReference>
<dbReference type="Pfam" id="PF02416">
    <property type="entry name" value="TatA_B_E"/>
    <property type="match status" value="1"/>
</dbReference>
<dbReference type="PRINTS" id="PR01506">
    <property type="entry name" value="TATBPROTEIN"/>
</dbReference>
<feature type="chain" id="PRO_0000301213" description="Sec-independent protein translocase protein TatB">
    <location>
        <begin position="1"/>
        <end position="229"/>
    </location>
</feature>
<feature type="transmembrane region" description="Helical" evidence="1">
    <location>
        <begin position="1"/>
        <end position="21"/>
    </location>
</feature>
<feature type="region of interest" description="Disordered" evidence="2">
    <location>
        <begin position="90"/>
        <end position="131"/>
    </location>
</feature>
<feature type="compositionally biased region" description="Polar residues" evidence="2">
    <location>
        <begin position="108"/>
        <end position="131"/>
    </location>
</feature>
<evidence type="ECO:0000255" key="1">
    <source>
        <dbReference type="HAMAP-Rule" id="MF_00237"/>
    </source>
</evidence>
<evidence type="ECO:0000256" key="2">
    <source>
        <dbReference type="SAM" id="MobiDB-lite"/>
    </source>
</evidence>
<protein>
    <recommendedName>
        <fullName evidence="1">Sec-independent protein translocase protein TatB</fullName>
    </recommendedName>
</protein>
<name>TATB_PSYA2</name>
<proteinExistence type="inferred from homology"/>
<reference key="1">
    <citation type="journal article" date="2010" name="Appl. Environ. Microbiol.">
        <title>The genome sequence of Psychrobacter arcticus 273-4, a psychroactive Siberian permafrost bacterium, reveals mechanisms for adaptation to low-temperature growth.</title>
        <authorList>
            <person name="Ayala-del-Rio H.L."/>
            <person name="Chain P.S."/>
            <person name="Grzymski J.J."/>
            <person name="Ponder M.A."/>
            <person name="Ivanova N."/>
            <person name="Bergholz P.W."/>
            <person name="Di Bartolo G."/>
            <person name="Hauser L."/>
            <person name="Land M."/>
            <person name="Bakermans C."/>
            <person name="Rodrigues D."/>
            <person name="Klappenbach J."/>
            <person name="Zarka D."/>
            <person name="Larimer F."/>
            <person name="Richardson P."/>
            <person name="Murray A."/>
            <person name="Thomashow M."/>
            <person name="Tiedje J.M."/>
        </authorList>
    </citation>
    <scope>NUCLEOTIDE SEQUENCE [LARGE SCALE GENOMIC DNA]</scope>
    <source>
        <strain>DSM 17307 / VKM B-2377 / 273-4</strain>
    </source>
</reference>